<name>XYN2_ARATH</name>
<sequence length="1063" mass="118371">MADLNIVMNGDFFAGIEPWYPNGCEAFVVSSDPFSSEVMSADSSSGGYVVVTNRKETWQGLEQDITTRVASGMNYTVSTCVGVSGPFNESAEVLSTVRLEHEDSPTEYLCIGKTYASRDKWVDLEGTFSISNMPDRVVLYLEGPAPGKDLLIRSVTVRSSTSSDFQETEKNTDASNVFPLALNIIKNHDFSDGLYSWNTNGCDSFVVSSNDCNLESNAVVNNRSETWQGLEQDITDNVSPGFSYKVSASVSVSGPVLGSAQVLATLKLEHKSSATEFQLIGKTYASKDIWKTLEGTFEVSGRPDRVVFFLEGPPPGIDLLVKSVTIHCESDNQFERSREFCSAPESDNHIFLNSSFSDGLNHWSGRGCNLMLHESLADGKILPDSGTCFASASERTHKWSGIEQDITERVQRKLIYEASSVVRLSHSHHTVQATLYVQYLDQREEYIGISSVQGTHDDWVELKGKFLLNGSPARAVVYIEGPPPGIDVFVDHFAVKPAEKETPSGRPYIESHAFGMNIVSNSHLSDGTIEGWFPLGDCHLKVGDGSPRILPPLARDSLRKTQGYLSGRYVLATNRSGTWMGPAQTITDKVKLFVTYQVSAWVKIGSGGRTSPQDVNIALSVDGNWVNGGKVEVDDGDWHEVVGSFRIEKEAKEVMLHVQGPSPGVDLMVAGLQIFAVDRKARLSYLRGQADVVRKRNVCLKFSGLDPSELSGATVKIRQTRNSFPLGSCISRSNIDNEDFVDFFLNNFDWAVFGYELKWYWTEPEQGNFNYRDANEMIEFCERYNIKTRGHCIFWEVESAIQPWVQQLTGSKLEAAVENRVTDLLTRYNGKFRHYDVNNEMLHGSFYRDRLDSDARANMFKTAHELDPLATLFLNEYHIEDGFDSRSSPEKYIKLVHKLQKKGAPVGGIGIQGHITSPVGHIVRSALDKLSTLGLPIWFTELDVSSTNEHIRGDDLEVMLWEAFAHPAVEGVMLWGFWELFMSREHSHLVNADGEVNEAGKRFLEIKREWLSFVDGEIEDGGGLEFRGYHGSYTVEVVTSESKYVTNFVVDKGNSPVDVIIDL</sequence>
<feature type="chain" id="PRO_0000445196" description="Endo-1,4-beta-xylanase 2">
    <location>
        <begin position="1"/>
        <end position="1063"/>
    </location>
</feature>
<feature type="domain" description="CBM-cenC 1" evidence="2">
    <location>
        <begin position="5"/>
        <end position="146"/>
    </location>
</feature>
<feature type="domain" description="CBM-cenC 2" evidence="2">
    <location>
        <begin position="183"/>
        <end position="313"/>
    </location>
</feature>
<feature type="domain" description="CBM-cenC 3" evidence="2">
    <location>
        <begin position="348"/>
        <end position="482"/>
    </location>
</feature>
<feature type="domain" description="CBM-cenC 4" evidence="2">
    <location>
        <begin position="517"/>
        <end position="662"/>
    </location>
</feature>
<feature type="domain" description="GH10" evidence="3">
    <location>
        <begin position="711"/>
        <end position="1006"/>
    </location>
</feature>
<feature type="active site" description="Proton donor" evidence="3">
    <location>
        <position position="840"/>
    </location>
</feature>
<feature type="active site" description="Nucleophile" evidence="3">
    <location>
        <position position="941"/>
    </location>
</feature>
<comment type="function">
    <text evidence="1">Binds to and hydrolyzes insoluble and soluble xylan substrates.</text>
</comment>
<comment type="catalytic activity">
    <reaction evidence="3">
        <text>Endohydrolysis of (1-&gt;4)-beta-D-xylosidic linkages in xylans.</text>
        <dbReference type="EC" id="3.2.1.8"/>
    </reaction>
</comment>
<comment type="pathway">
    <text evidence="3">Glycan degradation; xylan degradation.</text>
</comment>
<comment type="domain">
    <text evidence="1">The GH10 domain binds to xylan.</text>
</comment>
<comment type="similarity">
    <text evidence="3">Belongs to the glycosyl hydrolase 10 (cellulase F) family.</text>
</comment>
<gene>
    <name evidence="4" type="primary">XYN2</name>
    <name evidence="5" type="ordered locus">At1g10050</name>
    <name evidence="6" type="ORF">T27I1.7</name>
</gene>
<protein>
    <recommendedName>
        <fullName evidence="4">Endo-1,4-beta-xylanase 2</fullName>
        <shortName evidence="4">AtXyn2</shortName>
        <shortName evidence="4">Xylan endohydrolase 2</shortName>
        <shortName evidence="4">Xylanase 2</shortName>
        <ecNumber evidence="3">3.2.1.8</ecNumber>
    </recommendedName>
</protein>
<organism>
    <name type="scientific">Arabidopsis thaliana</name>
    <name type="common">Mouse-ear cress</name>
    <dbReference type="NCBI Taxonomy" id="3702"/>
    <lineage>
        <taxon>Eukaryota</taxon>
        <taxon>Viridiplantae</taxon>
        <taxon>Streptophyta</taxon>
        <taxon>Embryophyta</taxon>
        <taxon>Tracheophyta</taxon>
        <taxon>Spermatophyta</taxon>
        <taxon>Magnoliopsida</taxon>
        <taxon>eudicotyledons</taxon>
        <taxon>Gunneridae</taxon>
        <taxon>Pentapetalae</taxon>
        <taxon>rosids</taxon>
        <taxon>malvids</taxon>
        <taxon>Brassicales</taxon>
        <taxon>Brassicaceae</taxon>
        <taxon>Camelineae</taxon>
        <taxon>Arabidopsis</taxon>
    </lineage>
</organism>
<keyword id="KW-0119">Carbohydrate metabolism</keyword>
<keyword id="KW-0326">Glycosidase</keyword>
<keyword id="KW-0378">Hydrolase</keyword>
<keyword id="KW-0624">Polysaccharide degradation</keyword>
<keyword id="KW-1185">Reference proteome</keyword>
<keyword id="KW-0677">Repeat</keyword>
<keyword id="KW-0858">Xylan degradation</keyword>
<accession>O80596</accession>
<evidence type="ECO:0000250" key="1">
    <source>
        <dbReference type="UniProtKB" id="A3DH97"/>
    </source>
</evidence>
<evidence type="ECO:0000255" key="2"/>
<evidence type="ECO:0000255" key="3">
    <source>
        <dbReference type="PROSITE-ProRule" id="PRU01096"/>
    </source>
</evidence>
<evidence type="ECO:0000303" key="4">
    <source>
    </source>
</evidence>
<evidence type="ECO:0000312" key="5">
    <source>
        <dbReference type="Araport" id="AT1G10050"/>
    </source>
</evidence>
<evidence type="ECO:0000312" key="6">
    <source>
        <dbReference type="EMBL" id="AAC34334.1"/>
    </source>
</evidence>
<reference key="1">
    <citation type="journal article" date="2000" name="Nature">
        <title>Sequence and analysis of chromosome 1 of the plant Arabidopsis thaliana.</title>
        <authorList>
            <person name="Theologis A."/>
            <person name="Ecker J.R."/>
            <person name="Palm C.J."/>
            <person name="Federspiel N.A."/>
            <person name="Kaul S."/>
            <person name="White O."/>
            <person name="Alonso J."/>
            <person name="Altafi H."/>
            <person name="Araujo R."/>
            <person name="Bowman C.L."/>
            <person name="Brooks S.Y."/>
            <person name="Buehler E."/>
            <person name="Chan A."/>
            <person name="Chao Q."/>
            <person name="Chen H."/>
            <person name="Cheuk R.F."/>
            <person name="Chin C.W."/>
            <person name="Chung M.K."/>
            <person name="Conn L."/>
            <person name="Conway A.B."/>
            <person name="Conway A.R."/>
            <person name="Creasy T.H."/>
            <person name="Dewar K."/>
            <person name="Dunn P."/>
            <person name="Etgu P."/>
            <person name="Feldblyum T.V."/>
            <person name="Feng J.-D."/>
            <person name="Fong B."/>
            <person name="Fujii C.Y."/>
            <person name="Gill J.E."/>
            <person name="Goldsmith A.D."/>
            <person name="Haas B."/>
            <person name="Hansen N.F."/>
            <person name="Hughes B."/>
            <person name="Huizar L."/>
            <person name="Hunter J.L."/>
            <person name="Jenkins J."/>
            <person name="Johnson-Hopson C."/>
            <person name="Khan S."/>
            <person name="Khaykin E."/>
            <person name="Kim C.J."/>
            <person name="Koo H.L."/>
            <person name="Kremenetskaia I."/>
            <person name="Kurtz D.B."/>
            <person name="Kwan A."/>
            <person name="Lam B."/>
            <person name="Langin-Hooper S."/>
            <person name="Lee A."/>
            <person name="Lee J.M."/>
            <person name="Lenz C.A."/>
            <person name="Li J.H."/>
            <person name="Li Y.-P."/>
            <person name="Lin X."/>
            <person name="Liu S.X."/>
            <person name="Liu Z.A."/>
            <person name="Luros J.S."/>
            <person name="Maiti R."/>
            <person name="Marziali A."/>
            <person name="Militscher J."/>
            <person name="Miranda M."/>
            <person name="Nguyen M."/>
            <person name="Nierman W.C."/>
            <person name="Osborne B.I."/>
            <person name="Pai G."/>
            <person name="Peterson J."/>
            <person name="Pham P.K."/>
            <person name="Rizzo M."/>
            <person name="Rooney T."/>
            <person name="Rowley D."/>
            <person name="Sakano H."/>
            <person name="Salzberg S.L."/>
            <person name="Schwartz J.R."/>
            <person name="Shinn P."/>
            <person name="Southwick A.M."/>
            <person name="Sun H."/>
            <person name="Tallon L.J."/>
            <person name="Tambunga G."/>
            <person name="Toriumi M.J."/>
            <person name="Town C.D."/>
            <person name="Utterback T."/>
            <person name="Van Aken S."/>
            <person name="Vaysberg M."/>
            <person name="Vysotskaia V.S."/>
            <person name="Walker M."/>
            <person name="Wu D."/>
            <person name="Yu G."/>
            <person name="Fraser C.M."/>
            <person name="Venter J.C."/>
            <person name="Davis R.W."/>
        </authorList>
    </citation>
    <scope>NUCLEOTIDE SEQUENCE [LARGE SCALE GENOMIC DNA]</scope>
    <source>
        <strain>cv. Columbia</strain>
    </source>
</reference>
<reference key="2">
    <citation type="journal article" date="2017" name="Plant J.">
        <title>Araport11: a complete reannotation of the Arabidopsis thaliana reference genome.</title>
        <authorList>
            <person name="Cheng C.Y."/>
            <person name="Krishnakumar V."/>
            <person name="Chan A.P."/>
            <person name="Thibaud-Nissen F."/>
            <person name="Schobel S."/>
            <person name="Town C.D."/>
        </authorList>
    </citation>
    <scope>GENOME REANNOTATION</scope>
    <source>
        <strain>cv. Columbia</strain>
    </source>
</reference>
<reference key="3">
    <citation type="journal article" date="2002" name="Plant Cell Physiol.">
        <title>A xylanase, AtXyn1, is predominantly expressed in vascular bundles, and four putative xylanase genes were identified in the Arabidopsis thaliana genome.</title>
        <authorList>
            <person name="Suzuki M."/>
            <person name="Kato A."/>
            <person name="Nagata N."/>
            <person name="Komeda Y."/>
        </authorList>
    </citation>
    <scope>GENE FAMILY</scope>
    <source>
        <strain>cv. Columbia</strain>
    </source>
</reference>
<dbReference type="EC" id="3.2.1.8" evidence="3"/>
<dbReference type="EMBL" id="AC004122">
    <property type="protein sequence ID" value="AAC34334.1"/>
    <property type="molecule type" value="Genomic_DNA"/>
</dbReference>
<dbReference type="EMBL" id="CP002684">
    <property type="protein sequence ID" value="AEE28533.1"/>
    <property type="molecule type" value="Genomic_DNA"/>
</dbReference>
<dbReference type="EMBL" id="CP002684">
    <property type="protein sequence ID" value="ANM60238.1"/>
    <property type="molecule type" value="Genomic_DNA"/>
</dbReference>
<dbReference type="PIR" id="T00624">
    <property type="entry name" value="T00624"/>
</dbReference>
<dbReference type="RefSeq" id="NP_001322538.1">
    <property type="nucleotide sequence ID" value="NM_001331878.1"/>
</dbReference>
<dbReference type="RefSeq" id="NP_172476.1">
    <property type="nucleotide sequence ID" value="NM_100879.2"/>
</dbReference>
<dbReference type="SMR" id="O80596"/>
<dbReference type="FunCoup" id="O80596">
    <property type="interactions" value="33"/>
</dbReference>
<dbReference type="STRING" id="3702.O80596"/>
<dbReference type="CAZy" id="CBM22">
    <property type="family name" value="Carbohydrate-Binding Module Family 22"/>
</dbReference>
<dbReference type="CAZy" id="GH10">
    <property type="family name" value="Glycoside Hydrolase Family 10"/>
</dbReference>
<dbReference type="iPTMnet" id="O80596"/>
<dbReference type="PaxDb" id="3702-AT1G10050.1"/>
<dbReference type="EnsemblPlants" id="AT1G10050.1">
    <property type="protein sequence ID" value="AT1G10050.1"/>
    <property type="gene ID" value="AT1G10050"/>
</dbReference>
<dbReference type="EnsemblPlants" id="AT1G10050.2">
    <property type="protein sequence ID" value="AT1G10050.2"/>
    <property type="gene ID" value="AT1G10050"/>
</dbReference>
<dbReference type="GeneID" id="837540"/>
<dbReference type="Gramene" id="AT1G10050.1">
    <property type="protein sequence ID" value="AT1G10050.1"/>
    <property type="gene ID" value="AT1G10050"/>
</dbReference>
<dbReference type="Gramene" id="AT1G10050.2">
    <property type="protein sequence ID" value="AT1G10050.2"/>
    <property type="gene ID" value="AT1G10050"/>
</dbReference>
<dbReference type="KEGG" id="ath:AT1G10050"/>
<dbReference type="Araport" id="AT1G10050"/>
<dbReference type="TAIR" id="AT1G10050"/>
<dbReference type="HOGENOM" id="CLU_008797_0_0_1"/>
<dbReference type="InParanoid" id="O80596"/>
<dbReference type="OMA" id="LRTTHGY"/>
<dbReference type="PhylomeDB" id="O80596"/>
<dbReference type="UniPathway" id="UPA00114"/>
<dbReference type="PRO" id="PR:O80596"/>
<dbReference type="Proteomes" id="UP000006548">
    <property type="component" value="Chromosome 1"/>
</dbReference>
<dbReference type="ExpressionAtlas" id="O80596">
    <property type="expression patterns" value="baseline and differential"/>
</dbReference>
<dbReference type="GO" id="GO:0031176">
    <property type="term" value="F:endo-1,4-beta-xylanase activity"/>
    <property type="evidence" value="ECO:0000250"/>
    <property type="project" value="TAIR"/>
</dbReference>
<dbReference type="GO" id="GO:0045493">
    <property type="term" value="P:xylan catabolic process"/>
    <property type="evidence" value="ECO:0007669"/>
    <property type="project" value="UniProtKB-UniPathway"/>
</dbReference>
<dbReference type="FunFam" id="3.20.20.80:FF:000104">
    <property type="entry name" value="Endo-1,4-beta-xylanase A"/>
    <property type="match status" value="1"/>
</dbReference>
<dbReference type="FunFam" id="2.60.120.260:FF:000103">
    <property type="entry name" value="Glycosyl hydrolase family 10 protein"/>
    <property type="match status" value="2"/>
</dbReference>
<dbReference type="Gene3D" id="2.60.120.260">
    <property type="entry name" value="Galactose-binding domain-like"/>
    <property type="match status" value="4"/>
</dbReference>
<dbReference type="Gene3D" id="3.20.20.80">
    <property type="entry name" value="Glycosidases"/>
    <property type="match status" value="1"/>
</dbReference>
<dbReference type="InterPro" id="IPR003305">
    <property type="entry name" value="CenC_carb-bd"/>
</dbReference>
<dbReference type="InterPro" id="IPR008979">
    <property type="entry name" value="Galactose-bd-like_sf"/>
</dbReference>
<dbReference type="InterPro" id="IPR044846">
    <property type="entry name" value="GH10"/>
</dbReference>
<dbReference type="InterPro" id="IPR031158">
    <property type="entry name" value="GH10_AS"/>
</dbReference>
<dbReference type="InterPro" id="IPR001000">
    <property type="entry name" value="GH10_dom"/>
</dbReference>
<dbReference type="InterPro" id="IPR017853">
    <property type="entry name" value="Glycoside_hydrolase_SF"/>
</dbReference>
<dbReference type="PANTHER" id="PTHR31490:SF58">
    <property type="entry name" value="ENDO-1,4-BETA-XYLANASE 2"/>
    <property type="match status" value="1"/>
</dbReference>
<dbReference type="PANTHER" id="PTHR31490">
    <property type="entry name" value="GLYCOSYL HYDROLASE"/>
    <property type="match status" value="1"/>
</dbReference>
<dbReference type="Pfam" id="PF02018">
    <property type="entry name" value="CBM_4_9"/>
    <property type="match status" value="4"/>
</dbReference>
<dbReference type="Pfam" id="PF00331">
    <property type="entry name" value="Glyco_hydro_10"/>
    <property type="match status" value="1"/>
</dbReference>
<dbReference type="SMART" id="SM00633">
    <property type="entry name" value="Glyco_10"/>
    <property type="match status" value="1"/>
</dbReference>
<dbReference type="SUPFAM" id="SSF51445">
    <property type="entry name" value="(Trans)glycosidases"/>
    <property type="match status" value="1"/>
</dbReference>
<dbReference type="SUPFAM" id="SSF49785">
    <property type="entry name" value="Galactose-binding domain-like"/>
    <property type="match status" value="4"/>
</dbReference>
<dbReference type="PROSITE" id="PS00591">
    <property type="entry name" value="GH10_1"/>
    <property type="match status" value="1"/>
</dbReference>
<dbReference type="PROSITE" id="PS51760">
    <property type="entry name" value="GH10_2"/>
    <property type="match status" value="1"/>
</dbReference>
<proteinExistence type="inferred from homology"/>